<protein>
    <recommendedName>
        <fullName evidence="1">Glutamate-1-semialdehyde 2,1-aminomutase 2</fullName>
        <shortName evidence="1">GSA 2</shortName>
        <ecNumber evidence="1">5.4.3.8</ecNumber>
    </recommendedName>
    <alternativeName>
        <fullName evidence="1">Glutamate-1-semialdehyde aminotransferase 2</fullName>
        <shortName evidence="1">GSA-AT 2</shortName>
    </alternativeName>
</protein>
<evidence type="ECO:0000255" key="1">
    <source>
        <dbReference type="HAMAP-Rule" id="MF_00375"/>
    </source>
</evidence>
<name>GSA2_BACCZ</name>
<comment type="catalytic activity">
    <reaction evidence="1">
        <text>(S)-4-amino-5-oxopentanoate = 5-aminolevulinate</text>
        <dbReference type="Rhea" id="RHEA:14265"/>
        <dbReference type="ChEBI" id="CHEBI:57501"/>
        <dbReference type="ChEBI" id="CHEBI:356416"/>
        <dbReference type="EC" id="5.4.3.8"/>
    </reaction>
</comment>
<comment type="cofactor">
    <cofactor evidence="1">
        <name>pyridoxal 5'-phosphate</name>
        <dbReference type="ChEBI" id="CHEBI:597326"/>
    </cofactor>
</comment>
<comment type="pathway">
    <text evidence="1">Porphyrin-containing compound metabolism; protoporphyrin-IX biosynthesis; 5-aminolevulinate from L-glutamyl-tRNA(Glu): step 2/2.</text>
</comment>
<comment type="subunit">
    <text evidence="1">Homodimer.</text>
</comment>
<comment type="subcellular location">
    <subcellularLocation>
        <location evidence="1">Cytoplasm</location>
    </subcellularLocation>
</comment>
<comment type="similarity">
    <text evidence="1">Belongs to the class-III pyridoxal-phosphate-dependent aminotransferase family. HemL subfamily.</text>
</comment>
<dbReference type="EC" id="5.4.3.8" evidence="1"/>
<dbReference type="EMBL" id="CP000001">
    <property type="protein sequence ID" value="AAU16065.1"/>
    <property type="molecule type" value="Genomic_DNA"/>
</dbReference>
<dbReference type="SMR" id="Q633Y3"/>
<dbReference type="KEGG" id="bcz:BCE33L4205"/>
<dbReference type="PATRIC" id="fig|288681.22.peg.1178"/>
<dbReference type="UniPathway" id="UPA00251">
    <property type="reaction ID" value="UER00317"/>
</dbReference>
<dbReference type="Proteomes" id="UP000002612">
    <property type="component" value="Chromosome"/>
</dbReference>
<dbReference type="GO" id="GO:0005737">
    <property type="term" value="C:cytoplasm"/>
    <property type="evidence" value="ECO:0007669"/>
    <property type="project" value="UniProtKB-SubCell"/>
</dbReference>
<dbReference type="GO" id="GO:0042286">
    <property type="term" value="F:glutamate-1-semialdehyde 2,1-aminomutase activity"/>
    <property type="evidence" value="ECO:0007669"/>
    <property type="project" value="UniProtKB-UniRule"/>
</dbReference>
<dbReference type="GO" id="GO:0030170">
    <property type="term" value="F:pyridoxal phosphate binding"/>
    <property type="evidence" value="ECO:0007669"/>
    <property type="project" value="InterPro"/>
</dbReference>
<dbReference type="GO" id="GO:0008483">
    <property type="term" value="F:transaminase activity"/>
    <property type="evidence" value="ECO:0007669"/>
    <property type="project" value="InterPro"/>
</dbReference>
<dbReference type="GO" id="GO:0006782">
    <property type="term" value="P:protoporphyrinogen IX biosynthetic process"/>
    <property type="evidence" value="ECO:0007669"/>
    <property type="project" value="UniProtKB-UniRule"/>
</dbReference>
<dbReference type="CDD" id="cd00610">
    <property type="entry name" value="OAT_like"/>
    <property type="match status" value="1"/>
</dbReference>
<dbReference type="FunFam" id="3.40.640.10:FF:000021">
    <property type="entry name" value="Glutamate-1-semialdehyde 2,1-aminomutase"/>
    <property type="match status" value="1"/>
</dbReference>
<dbReference type="Gene3D" id="3.90.1150.10">
    <property type="entry name" value="Aspartate Aminotransferase, domain 1"/>
    <property type="match status" value="1"/>
</dbReference>
<dbReference type="Gene3D" id="3.40.640.10">
    <property type="entry name" value="Type I PLP-dependent aspartate aminotransferase-like (Major domain)"/>
    <property type="match status" value="1"/>
</dbReference>
<dbReference type="HAMAP" id="MF_00375">
    <property type="entry name" value="HemL_aminotrans_3"/>
    <property type="match status" value="1"/>
</dbReference>
<dbReference type="InterPro" id="IPR004639">
    <property type="entry name" value="4pyrrol_synth_GluAld_NH2Trfase"/>
</dbReference>
<dbReference type="InterPro" id="IPR005814">
    <property type="entry name" value="Aminotrans_3"/>
</dbReference>
<dbReference type="InterPro" id="IPR049704">
    <property type="entry name" value="Aminotrans_3_PPA_site"/>
</dbReference>
<dbReference type="InterPro" id="IPR015424">
    <property type="entry name" value="PyrdxlP-dep_Trfase"/>
</dbReference>
<dbReference type="InterPro" id="IPR015421">
    <property type="entry name" value="PyrdxlP-dep_Trfase_major"/>
</dbReference>
<dbReference type="InterPro" id="IPR015422">
    <property type="entry name" value="PyrdxlP-dep_Trfase_small"/>
</dbReference>
<dbReference type="NCBIfam" id="TIGR00713">
    <property type="entry name" value="hemL"/>
    <property type="match status" value="1"/>
</dbReference>
<dbReference type="NCBIfam" id="NF000818">
    <property type="entry name" value="PRK00062.1"/>
    <property type="match status" value="1"/>
</dbReference>
<dbReference type="PANTHER" id="PTHR43713">
    <property type="entry name" value="GLUTAMATE-1-SEMIALDEHYDE 2,1-AMINOMUTASE"/>
    <property type="match status" value="1"/>
</dbReference>
<dbReference type="PANTHER" id="PTHR43713:SF3">
    <property type="entry name" value="GLUTAMATE-1-SEMIALDEHYDE 2,1-AMINOMUTASE 1, CHLOROPLASTIC-RELATED"/>
    <property type="match status" value="1"/>
</dbReference>
<dbReference type="Pfam" id="PF00202">
    <property type="entry name" value="Aminotran_3"/>
    <property type="match status" value="1"/>
</dbReference>
<dbReference type="SUPFAM" id="SSF53383">
    <property type="entry name" value="PLP-dependent transferases"/>
    <property type="match status" value="1"/>
</dbReference>
<dbReference type="PROSITE" id="PS00600">
    <property type="entry name" value="AA_TRANSFER_CLASS_3"/>
    <property type="match status" value="1"/>
</dbReference>
<gene>
    <name evidence="1" type="primary">hemL2</name>
    <name type="ordered locus">BCE33L4205</name>
</gene>
<reference key="1">
    <citation type="journal article" date="2006" name="J. Bacteriol.">
        <title>Pathogenomic sequence analysis of Bacillus cereus and Bacillus thuringiensis isolates closely related to Bacillus anthracis.</title>
        <authorList>
            <person name="Han C.S."/>
            <person name="Xie G."/>
            <person name="Challacombe J.F."/>
            <person name="Altherr M.R."/>
            <person name="Bhotika S.S."/>
            <person name="Bruce D."/>
            <person name="Campbell C.S."/>
            <person name="Campbell M.L."/>
            <person name="Chen J."/>
            <person name="Chertkov O."/>
            <person name="Cleland C."/>
            <person name="Dimitrijevic M."/>
            <person name="Doggett N.A."/>
            <person name="Fawcett J.J."/>
            <person name="Glavina T."/>
            <person name="Goodwin L.A."/>
            <person name="Hill K.K."/>
            <person name="Hitchcock P."/>
            <person name="Jackson P.J."/>
            <person name="Keim P."/>
            <person name="Kewalramani A.R."/>
            <person name="Longmire J."/>
            <person name="Lucas S."/>
            <person name="Malfatti S."/>
            <person name="McMurry K."/>
            <person name="Meincke L.J."/>
            <person name="Misra M."/>
            <person name="Moseman B.L."/>
            <person name="Mundt M."/>
            <person name="Munk A.C."/>
            <person name="Okinaka R.T."/>
            <person name="Parson-Quintana B."/>
            <person name="Reilly L.P."/>
            <person name="Richardson P."/>
            <person name="Robinson D.L."/>
            <person name="Rubin E."/>
            <person name="Saunders E."/>
            <person name="Tapia R."/>
            <person name="Tesmer J.G."/>
            <person name="Thayer N."/>
            <person name="Thompson L.S."/>
            <person name="Tice H."/>
            <person name="Ticknor L.O."/>
            <person name="Wills P.L."/>
            <person name="Brettin T.S."/>
            <person name="Gilna P."/>
        </authorList>
    </citation>
    <scope>NUCLEOTIDE SEQUENCE [LARGE SCALE GENOMIC DNA]</scope>
    <source>
        <strain>ZK / E33L</strain>
    </source>
</reference>
<accession>Q633Y3</accession>
<keyword id="KW-0963">Cytoplasm</keyword>
<keyword id="KW-0413">Isomerase</keyword>
<keyword id="KW-0627">Porphyrin biosynthesis</keyword>
<keyword id="KW-0663">Pyridoxal phosphate</keyword>
<sequence length="429" mass="46004">MKKFDKSIAAFEEAQDLMPGGVNSPVRAFKSVGMNPLFMERGKGSKVYDIDGNEYIDYVLSWGPLIHGHANDRVVEALKAVAERGTSFGAPTEIENKLAKLVIERVPSIEIVRMVNSGTEATMSALRLARGYTGRNKILKFIGCYHGHGDSLLIKAGSGVATLGLPDSPGVPEGVAKNTITVAYNDLESVKYAFEQFGDDIACVIVEPVAGNMGVVPPQPGFLEGLREVTEQNGALLIFDEVMTGFRVAYNCGQGYYGVTPDLTCLGKVIGGGLPVGAYGGKAEIMRQVAPSGPIYQAGTLSGNPLAMAAGYETLVQLTPESYVEFERKAEMLEAGLRKAAEKHGIPHHINRAGSMIGIFFTDEPVINYDAAKSSNLQFFAAYYREMVEQGVFLPPSQFEGLFLSTAHSDADIEATIAAAEIAMSKLKA</sequence>
<proteinExistence type="inferred from homology"/>
<organism>
    <name type="scientific">Bacillus cereus (strain ZK / E33L)</name>
    <dbReference type="NCBI Taxonomy" id="288681"/>
    <lineage>
        <taxon>Bacteria</taxon>
        <taxon>Bacillati</taxon>
        <taxon>Bacillota</taxon>
        <taxon>Bacilli</taxon>
        <taxon>Bacillales</taxon>
        <taxon>Bacillaceae</taxon>
        <taxon>Bacillus</taxon>
        <taxon>Bacillus cereus group</taxon>
    </lineage>
</organism>
<feature type="chain" id="PRO_0000243543" description="Glutamate-1-semialdehyde 2,1-aminomutase 2">
    <location>
        <begin position="1"/>
        <end position="429"/>
    </location>
</feature>
<feature type="modified residue" description="N6-(pyridoxal phosphate)lysine" evidence="1">
    <location>
        <position position="268"/>
    </location>
</feature>